<reference key="1">
    <citation type="journal article" date="1994" name="Yeast">
        <title>Sequencing of a 13.2 kb segment next to the left telomere of yeast chromosome XI revealed five open reading frames and recent recombination events with the right arms of chromosomes III and V.</title>
        <authorList>
            <person name="Alexandraki D."/>
            <person name="Tzermia M."/>
        </authorList>
    </citation>
    <scope>NUCLEOTIDE SEQUENCE [GENOMIC DNA]</scope>
    <source>
        <strain>ATCC 204508 / S288c</strain>
    </source>
</reference>
<reference key="2">
    <citation type="journal article" date="1994" name="Nature">
        <title>Complete DNA sequence of yeast chromosome XI.</title>
        <authorList>
            <person name="Dujon B."/>
            <person name="Alexandraki D."/>
            <person name="Andre B."/>
            <person name="Ansorge W."/>
            <person name="Baladron V."/>
            <person name="Ballesta J.P.G."/>
            <person name="Banrevi A."/>
            <person name="Bolle P.-A."/>
            <person name="Bolotin-Fukuhara M."/>
            <person name="Bossier P."/>
            <person name="Bou G."/>
            <person name="Boyer J."/>
            <person name="Buitrago M.J."/>
            <person name="Cheret G."/>
            <person name="Colleaux L."/>
            <person name="Daignan-Fornier B."/>
            <person name="del Rey F."/>
            <person name="Dion C."/>
            <person name="Domdey H."/>
            <person name="Duesterhoeft A."/>
            <person name="Duesterhus S."/>
            <person name="Entian K.-D."/>
            <person name="Erfle H."/>
            <person name="Esteban P.F."/>
            <person name="Feldmann H."/>
            <person name="Fernandes L."/>
            <person name="Fobo G.M."/>
            <person name="Fritz C."/>
            <person name="Fukuhara H."/>
            <person name="Gabel C."/>
            <person name="Gaillon L."/>
            <person name="Garcia-Cantalejo J.M."/>
            <person name="Garcia-Ramirez J.J."/>
            <person name="Gent M.E."/>
            <person name="Ghazvini M."/>
            <person name="Goffeau A."/>
            <person name="Gonzalez A."/>
            <person name="Grothues D."/>
            <person name="Guerreiro P."/>
            <person name="Hegemann J.H."/>
            <person name="Hewitt N."/>
            <person name="Hilger F."/>
            <person name="Hollenberg C.P."/>
            <person name="Horaitis O."/>
            <person name="Indge K.J."/>
            <person name="Jacquier A."/>
            <person name="James C.M."/>
            <person name="Jauniaux J.-C."/>
            <person name="Jimenez A."/>
            <person name="Keuchel H."/>
            <person name="Kirchrath L."/>
            <person name="Kleine K."/>
            <person name="Koetter P."/>
            <person name="Legrain P."/>
            <person name="Liebl S."/>
            <person name="Louis E.J."/>
            <person name="Maia e Silva A."/>
            <person name="Marck C."/>
            <person name="Monnier A.-L."/>
            <person name="Moestl D."/>
            <person name="Mueller S."/>
            <person name="Obermaier B."/>
            <person name="Oliver S.G."/>
            <person name="Pallier C."/>
            <person name="Pascolo S."/>
            <person name="Pfeiffer F."/>
            <person name="Philippsen P."/>
            <person name="Planta R.J."/>
            <person name="Pohl F.M."/>
            <person name="Pohl T.M."/>
            <person name="Poehlmann R."/>
            <person name="Portetelle D."/>
            <person name="Purnelle B."/>
            <person name="Puzos V."/>
            <person name="Ramezani Rad M."/>
            <person name="Rasmussen S.W."/>
            <person name="Remacha M.A."/>
            <person name="Revuelta J.L."/>
            <person name="Richard G.-F."/>
            <person name="Rieger M."/>
            <person name="Rodrigues-Pousada C."/>
            <person name="Rose M."/>
            <person name="Rupp T."/>
            <person name="Santos M.A."/>
            <person name="Schwager C."/>
            <person name="Sensen C."/>
            <person name="Skala J."/>
            <person name="Soares H."/>
            <person name="Sor F."/>
            <person name="Stegemann J."/>
            <person name="Tettelin H."/>
            <person name="Thierry A."/>
            <person name="Tzermia M."/>
            <person name="Urrestarazu L.A."/>
            <person name="van Dyck L."/>
            <person name="van Vliet-Reedijk J.C."/>
            <person name="Valens M."/>
            <person name="Vandenbol M."/>
            <person name="Vilela C."/>
            <person name="Vissers S."/>
            <person name="von Wettstein D."/>
            <person name="Voss H."/>
            <person name="Wiemann S."/>
            <person name="Xu G."/>
            <person name="Zimmermann J."/>
            <person name="Haasemann M."/>
            <person name="Becker I."/>
            <person name="Mewes H.-W."/>
        </authorList>
    </citation>
    <scope>NUCLEOTIDE SEQUENCE [LARGE SCALE GENOMIC DNA]</scope>
    <source>
        <strain>ATCC 204508 / S288c</strain>
    </source>
</reference>
<reference key="3">
    <citation type="journal article" date="2014" name="G3 (Bethesda)">
        <title>The reference genome sequence of Saccharomyces cerevisiae: Then and now.</title>
        <authorList>
            <person name="Engel S.R."/>
            <person name="Dietrich F.S."/>
            <person name="Fisk D.G."/>
            <person name="Binkley G."/>
            <person name="Balakrishnan R."/>
            <person name="Costanzo M.C."/>
            <person name="Dwight S.S."/>
            <person name="Hitz B.C."/>
            <person name="Karra K."/>
            <person name="Nash R.S."/>
            <person name="Weng S."/>
            <person name="Wong E.D."/>
            <person name="Lloyd P."/>
            <person name="Skrzypek M.S."/>
            <person name="Miyasato S.R."/>
            <person name="Simison M."/>
            <person name="Cherry J.M."/>
        </authorList>
    </citation>
    <scope>GENOME REANNOTATION</scope>
    <source>
        <strain>ATCC 204508 / S288c</strain>
    </source>
</reference>
<organism>
    <name type="scientific">Saccharomyces cerevisiae (strain ATCC 204508 / S288c)</name>
    <name type="common">Baker's yeast</name>
    <dbReference type="NCBI Taxonomy" id="559292"/>
    <lineage>
        <taxon>Eukaryota</taxon>
        <taxon>Fungi</taxon>
        <taxon>Dikarya</taxon>
        <taxon>Ascomycota</taxon>
        <taxon>Saccharomycotina</taxon>
        <taxon>Saccharomycetes</taxon>
        <taxon>Saccharomycetales</taxon>
        <taxon>Saccharomycetaceae</taxon>
        <taxon>Saccharomyces</taxon>
    </lineage>
</organism>
<comment type="similarity">
    <text evidence="1">Belongs to the UPF0377 family.</text>
</comment>
<comment type="caution">
    <text evidence="2">Product of a dubious gene prediction unlikely to encode a functional protein. Because of that it is not part of the S.cerevisiae S288c complete/reference proteome set.</text>
</comment>
<dbReference type="EMBL" id="X75950">
    <property type="protein sequence ID" value="CAA53550.1"/>
    <property type="molecule type" value="Genomic_DNA"/>
</dbReference>
<dbReference type="EMBL" id="Z28223">
    <property type="protein sequence ID" value="CAA82068.1"/>
    <property type="molecule type" value="Genomic_DNA"/>
</dbReference>
<dbReference type="PIR" id="S38067">
    <property type="entry name" value="S38067"/>
</dbReference>
<dbReference type="IntAct" id="P36031">
    <property type="interactions" value="1"/>
</dbReference>
<dbReference type="STRING" id="4932.YKL223W"/>
<dbReference type="PaxDb" id="4932-YKL223W"/>
<dbReference type="EnsemblFungi" id="YKL223W_mRNA">
    <property type="protein sequence ID" value="YKL223W"/>
    <property type="gene ID" value="YKL223W"/>
</dbReference>
<dbReference type="AGR" id="SGD:S000001706"/>
<dbReference type="SGD" id="S000001706">
    <property type="gene designation" value="YKL223W"/>
</dbReference>
<dbReference type="GeneTree" id="ENSGT00940000177730"/>
<dbReference type="HOGENOM" id="CLU_173518_0_0_1"/>
<protein>
    <recommendedName>
        <fullName>Putative UPF0377 protein YKL223W</fullName>
    </recommendedName>
</protein>
<evidence type="ECO:0000305" key="1"/>
<evidence type="ECO:0000305" key="2">
    <source>
    </source>
</evidence>
<sequence>MEMLLFLNESYIFHRLRMWSTVLWHSCVFVCVECENANYRVPRCLIKPFSVPVTFPFSVKKNIRILDLDPRTEAYCLSPYSVCSKRLPCKKYFYLLNSYNIKRVLGVVYC</sequence>
<gene>
    <name type="ordered locus">YKL223W</name>
</gene>
<accession>P36031</accession>
<feature type="chain" id="PRO_0000203130" description="Putative UPF0377 protein YKL223W">
    <location>
        <begin position="1"/>
        <end position="110"/>
    </location>
</feature>
<proteinExistence type="uncertain"/>
<name>YKW3_YEAST</name>